<name>NDK_STRZT</name>
<keyword id="KW-0067">ATP-binding</keyword>
<keyword id="KW-0963">Cytoplasm</keyword>
<keyword id="KW-0418">Kinase</keyword>
<keyword id="KW-0460">Magnesium</keyword>
<keyword id="KW-0479">Metal-binding</keyword>
<keyword id="KW-0546">Nucleotide metabolism</keyword>
<keyword id="KW-0547">Nucleotide-binding</keyword>
<keyword id="KW-0597">Phosphoprotein</keyword>
<keyword id="KW-0808">Transferase</keyword>
<proteinExistence type="inferred from homology"/>
<gene>
    <name evidence="1" type="primary">ndk</name>
    <name type="ordered locus">SPT_1936</name>
</gene>
<evidence type="ECO:0000255" key="1">
    <source>
        <dbReference type="HAMAP-Rule" id="MF_00451"/>
    </source>
</evidence>
<reference key="1">
    <citation type="journal article" date="2010" name="Genome Biol.">
        <title>Structure and dynamics of the pan-genome of Streptococcus pneumoniae and closely related species.</title>
        <authorList>
            <person name="Donati C."/>
            <person name="Hiller N.L."/>
            <person name="Tettelin H."/>
            <person name="Muzzi A."/>
            <person name="Croucher N.J."/>
            <person name="Angiuoli S.V."/>
            <person name="Oggioni M."/>
            <person name="Dunning Hotopp J.C."/>
            <person name="Hu F.Z."/>
            <person name="Riley D.R."/>
            <person name="Covacci A."/>
            <person name="Mitchell T.J."/>
            <person name="Bentley S.D."/>
            <person name="Kilian M."/>
            <person name="Ehrlich G.D."/>
            <person name="Rappuoli R."/>
            <person name="Moxon E.R."/>
            <person name="Masignani V."/>
        </authorList>
    </citation>
    <scope>NUCLEOTIDE SEQUENCE [LARGE SCALE GENOMIC DNA]</scope>
    <source>
        <strain>Taiwan19F-14</strain>
    </source>
</reference>
<protein>
    <recommendedName>
        <fullName evidence="1">Nucleoside diphosphate kinase</fullName>
        <shortName evidence="1">NDK</shortName>
        <shortName evidence="1">NDP kinase</shortName>
        <ecNumber evidence="1">2.7.4.6</ecNumber>
    </recommendedName>
    <alternativeName>
        <fullName evidence="1">Nucleoside-2-P kinase</fullName>
    </alternativeName>
</protein>
<feature type="chain" id="PRO_1000192294" description="Nucleoside diphosphate kinase">
    <location>
        <begin position="1"/>
        <end position="137"/>
    </location>
</feature>
<feature type="active site" description="Pros-phosphohistidine intermediate" evidence="1">
    <location>
        <position position="121"/>
    </location>
</feature>
<feature type="binding site" evidence="1">
    <location>
        <position position="9"/>
    </location>
    <ligand>
        <name>ATP</name>
        <dbReference type="ChEBI" id="CHEBI:30616"/>
    </ligand>
</feature>
<feature type="binding site" evidence="1">
    <location>
        <position position="58"/>
    </location>
    <ligand>
        <name>ATP</name>
        <dbReference type="ChEBI" id="CHEBI:30616"/>
    </ligand>
</feature>
<feature type="binding site" evidence="1">
    <location>
        <position position="86"/>
    </location>
    <ligand>
        <name>ATP</name>
        <dbReference type="ChEBI" id="CHEBI:30616"/>
    </ligand>
</feature>
<feature type="binding site" evidence="1">
    <location>
        <position position="92"/>
    </location>
    <ligand>
        <name>ATP</name>
        <dbReference type="ChEBI" id="CHEBI:30616"/>
    </ligand>
</feature>
<feature type="binding site" evidence="1">
    <location>
        <position position="103"/>
    </location>
    <ligand>
        <name>ATP</name>
        <dbReference type="ChEBI" id="CHEBI:30616"/>
    </ligand>
</feature>
<feature type="binding site" evidence="1">
    <location>
        <position position="113"/>
    </location>
    <ligand>
        <name>ATP</name>
        <dbReference type="ChEBI" id="CHEBI:30616"/>
    </ligand>
</feature>
<comment type="function">
    <text evidence="1">Major role in the synthesis of nucleoside triphosphates other than ATP. The ATP gamma phosphate is transferred to the NDP beta phosphate via a ping-pong mechanism, using a phosphorylated active-site intermediate.</text>
</comment>
<comment type="catalytic activity">
    <reaction evidence="1">
        <text>a 2'-deoxyribonucleoside 5'-diphosphate + ATP = a 2'-deoxyribonucleoside 5'-triphosphate + ADP</text>
        <dbReference type="Rhea" id="RHEA:44640"/>
        <dbReference type="ChEBI" id="CHEBI:30616"/>
        <dbReference type="ChEBI" id="CHEBI:61560"/>
        <dbReference type="ChEBI" id="CHEBI:73316"/>
        <dbReference type="ChEBI" id="CHEBI:456216"/>
        <dbReference type="EC" id="2.7.4.6"/>
    </reaction>
</comment>
<comment type="catalytic activity">
    <reaction evidence="1">
        <text>a ribonucleoside 5'-diphosphate + ATP = a ribonucleoside 5'-triphosphate + ADP</text>
        <dbReference type="Rhea" id="RHEA:18113"/>
        <dbReference type="ChEBI" id="CHEBI:30616"/>
        <dbReference type="ChEBI" id="CHEBI:57930"/>
        <dbReference type="ChEBI" id="CHEBI:61557"/>
        <dbReference type="ChEBI" id="CHEBI:456216"/>
        <dbReference type="EC" id="2.7.4.6"/>
    </reaction>
</comment>
<comment type="cofactor">
    <cofactor evidence="1">
        <name>Mg(2+)</name>
        <dbReference type="ChEBI" id="CHEBI:18420"/>
    </cofactor>
</comment>
<comment type="subunit">
    <text evidence="1">Homotetramer.</text>
</comment>
<comment type="subcellular location">
    <subcellularLocation>
        <location evidence="1">Cytoplasm</location>
    </subcellularLocation>
</comment>
<comment type="similarity">
    <text evidence="1">Belongs to the NDK family.</text>
</comment>
<dbReference type="EC" id="2.7.4.6" evidence="1"/>
<dbReference type="EMBL" id="CP000921">
    <property type="protein sequence ID" value="ACO22333.1"/>
    <property type="molecule type" value="Genomic_DNA"/>
</dbReference>
<dbReference type="RefSeq" id="WP_000438289.1">
    <property type="nucleotide sequence ID" value="NC_012469.1"/>
</dbReference>
<dbReference type="SMR" id="C1CTL2"/>
<dbReference type="KEGG" id="snt:SPT_1936"/>
<dbReference type="HOGENOM" id="CLU_060216_6_3_9"/>
<dbReference type="GO" id="GO:0005737">
    <property type="term" value="C:cytoplasm"/>
    <property type="evidence" value="ECO:0007669"/>
    <property type="project" value="UniProtKB-SubCell"/>
</dbReference>
<dbReference type="GO" id="GO:0005524">
    <property type="term" value="F:ATP binding"/>
    <property type="evidence" value="ECO:0007669"/>
    <property type="project" value="UniProtKB-UniRule"/>
</dbReference>
<dbReference type="GO" id="GO:0046872">
    <property type="term" value="F:metal ion binding"/>
    <property type="evidence" value="ECO:0007669"/>
    <property type="project" value="UniProtKB-KW"/>
</dbReference>
<dbReference type="GO" id="GO:0004550">
    <property type="term" value="F:nucleoside diphosphate kinase activity"/>
    <property type="evidence" value="ECO:0007669"/>
    <property type="project" value="UniProtKB-UniRule"/>
</dbReference>
<dbReference type="GO" id="GO:0006241">
    <property type="term" value="P:CTP biosynthetic process"/>
    <property type="evidence" value="ECO:0007669"/>
    <property type="project" value="UniProtKB-UniRule"/>
</dbReference>
<dbReference type="GO" id="GO:0006183">
    <property type="term" value="P:GTP biosynthetic process"/>
    <property type="evidence" value="ECO:0007669"/>
    <property type="project" value="UniProtKB-UniRule"/>
</dbReference>
<dbReference type="GO" id="GO:0006228">
    <property type="term" value="P:UTP biosynthetic process"/>
    <property type="evidence" value="ECO:0007669"/>
    <property type="project" value="UniProtKB-UniRule"/>
</dbReference>
<dbReference type="CDD" id="cd04413">
    <property type="entry name" value="NDPk_I"/>
    <property type="match status" value="1"/>
</dbReference>
<dbReference type="FunFam" id="3.30.70.141:FF:000013">
    <property type="entry name" value="Nucleoside diphosphate kinase"/>
    <property type="match status" value="1"/>
</dbReference>
<dbReference type="Gene3D" id="3.30.70.141">
    <property type="entry name" value="Nucleoside diphosphate kinase-like domain"/>
    <property type="match status" value="1"/>
</dbReference>
<dbReference type="HAMAP" id="MF_00451">
    <property type="entry name" value="NDP_kinase"/>
    <property type="match status" value="1"/>
</dbReference>
<dbReference type="InterPro" id="IPR034907">
    <property type="entry name" value="NDK-like_dom"/>
</dbReference>
<dbReference type="InterPro" id="IPR036850">
    <property type="entry name" value="NDK-like_dom_sf"/>
</dbReference>
<dbReference type="InterPro" id="IPR001564">
    <property type="entry name" value="Nucleoside_diP_kinase"/>
</dbReference>
<dbReference type="InterPro" id="IPR023005">
    <property type="entry name" value="Nucleoside_diP_kinase_AS"/>
</dbReference>
<dbReference type="NCBIfam" id="NF001908">
    <property type="entry name" value="PRK00668.1"/>
    <property type="match status" value="1"/>
</dbReference>
<dbReference type="PANTHER" id="PTHR11349">
    <property type="entry name" value="NUCLEOSIDE DIPHOSPHATE KINASE"/>
    <property type="match status" value="1"/>
</dbReference>
<dbReference type="Pfam" id="PF00334">
    <property type="entry name" value="NDK"/>
    <property type="match status" value="1"/>
</dbReference>
<dbReference type="PRINTS" id="PR01243">
    <property type="entry name" value="NUCDPKINASE"/>
</dbReference>
<dbReference type="SMART" id="SM00562">
    <property type="entry name" value="NDK"/>
    <property type="match status" value="1"/>
</dbReference>
<dbReference type="SUPFAM" id="SSF54919">
    <property type="entry name" value="Nucleoside diphosphate kinase, NDK"/>
    <property type="match status" value="1"/>
</dbReference>
<dbReference type="PROSITE" id="PS00469">
    <property type="entry name" value="NDPK"/>
    <property type="match status" value="1"/>
</dbReference>
<dbReference type="PROSITE" id="PS51374">
    <property type="entry name" value="NDPK_LIKE"/>
    <property type="match status" value="1"/>
</dbReference>
<accession>C1CTL2</accession>
<sequence>MEQTFFIIKPDGVKRGLVGEVLKRIEQRGFTIEKLEFRSQVSEELIDQHYQDLVGQSFYPPIREFMTSGPVLVGVISGPKVIETWRTMMGATRPEEALPGTIRGDFAKAAGENEIIQNVVHGSDSEESAKREIALWF</sequence>
<organism>
    <name type="scientific">Streptococcus pneumoniae (strain Taiwan19F-14)</name>
    <dbReference type="NCBI Taxonomy" id="487213"/>
    <lineage>
        <taxon>Bacteria</taxon>
        <taxon>Bacillati</taxon>
        <taxon>Bacillota</taxon>
        <taxon>Bacilli</taxon>
        <taxon>Lactobacillales</taxon>
        <taxon>Streptococcaceae</taxon>
        <taxon>Streptococcus</taxon>
    </lineage>
</organism>